<keyword id="KW-1185">Reference proteome</keyword>
<feature type="chain" id="PRO_0000330385" description="HssA/B-like protein 15">
    <location>
        <begin position="1"/>
        <end position="89"/>
    </location>
</feature>
<protein>
    <recommendedName>
        <fullName>HssA/B-like protein 15</fullName>
    </recommendedName>
</protein>
<reference key="1">
    <citation type="journal article" date="2002" name="Nature">
        <title>Sequence and analysis of chromosome 2 of Dictyostelium discoideum.</title>
        <authorList>
            <person name="Gloeckner G."/>
            <person name="Eichinger L."/>
            <person name="Szafranski K."/>
            <person name="Pachebat J.A."/>
            <person name="Bankier A.T."/>
            <person name="Dear P.H."/>
            <person name="Lehmann R."/>
            <person name="Baumgart C."/>
            <person name="Parra G."/>
            <person name="Abril J.F."/>
            <person name="Guigo R."/>
            <person name="Kumpf K."/>
            <person name="Tunggal B."/>
            <person name="Cox E.C."/>
            <person name="Quail M.A."/>
            <person name="Platzer M."/>
            <person name="Rosenthal A."/>
            <person name="Noegel A.A."/>
        </authorList>
    </citation>
    <scope>NUCLEOTIDE SEQUENCE [LARGE SCALE GENOMIC DNA]</scope>
    <source>
        <strain>AX4</strain>
    </source>
</reference>
<reference key="2">
    <citation type="journal article" date="2005" name="Nature">
        <title>The genome of the social amoeba Dictyostelium discoideum.</title>
        <authorList>
            <person name="Eichinger L."/>
            <person name="Pachebat J.A."/>
            <person name="Gloeckner G."/>
            <person name="Rajandream M.A."/>
            <person name="Sucgang R."/>
            <person name="Berriman M."/>
            <person name="Song J."/>
            <person name="Olsen R."/>
            <person name="Szafranski K."/>
            <person name="Xu Q."/>
            <person name="Tunggal B."/>
            <person name="Kummerfeld S."/>
            <person name="Madera M."/>
            <person name="Konfortov B.A."/>
            <person name="Rivero F."/>
            <person name="Bankier A.T."/>
            <person name="Lehmann R."/>
            <person name="Hamlin N."/>
            <person name="Davies R."/>
            <person name="Gaudet P."/>
            <person name="Fey P."/>
            <person name="Pilcher K."/>
            <person name="Chen G."/>
            <person name="Saunders D."/>
            <person name="Sodergren E.J."/>
            <person name="Davis P."/>
            <person name="Kerhornou A."/>
            <person name="Nie X."/>
            <person name="Hall N."/>
            <person name="Anjard C."/>
            <person name="Hemphill L."/>
            <person name="Bason N."/>
            <person name="Farbrother P."/>
            <person name="Desany B."/>
            <person name="Just E."/>
            <person name="Morio T."/>
            <person name="Rost R."/>
            <person name="Churcher C.M."/>
            <person name="Cooper J."/>
            <person name="Haydock S."/>
            <person name="van Driessche N."/>
            <person name="Cronin A."/>
            <person name="Goodhead I."/>
            <person name="Muzny D.M."/>
            <person name="Mourier T."/>
            <person name="Pain A."/>
            <person name="Lu M."/>
            <person name="Harper D."/>
            <person name="Lindsay R."/>
            <person name="Hauser H."/>
            <person name="James K.D."/>
            <person name="Quiles M."/>
            <person name="Madan Babu M."/>
            <person name="Saito T."/>
            <person name="Buchrieser C."/>
            <person name="Wardroper A."/>
            <person name="Felder M."/>
            <person name="Thangavelu M."/>
            <person name="Johnson D."/>
            <person name="Knights A."/>
            <person name="Loulseged H."/>
            <person name="Mungall K.L."/>
            <person name="Oliver K."/>
            <person name="Price C."/>
            <person name="Quail M.A."/>
            <person name="Urushihara H."/>
            <person name="Hernandez J."/>
            <person name="Rabbinowitsch E."/>
            <person name="Steffen D."/>
            <person name="Sanders M."/>
            <person name="Ma J."/>
            <person name="Kohara Y."/>
            <person name="Sharp S."/>
            <person name="Simmonds M.N."/>
            <person name="Spiegler S."/>
            <person name="Tivey A."/>
            <person name="Sugano S."/>
            <person name="White B."/>
            <person name="Walker D."/>
            <person name="Woodward J.R."/>
            <person name="Winckler T."/>
            <person name="Tanaka Y."/>
            <person name="Shaulsky G."/>
            <person name="Schleicher M."/>
            <person name="Weinstock G.M."/>
            <person name="Rosenthal A."/>
            <person name="Cox E.C."/>
            <person name="Chisholm R.L."/>
            <person name="Gibbs R.A."/>
            <person name="Loomis W.F."/>
            <person name="Platzer M."/>
            <person name="Kay R.R."/>
            <person name="Williams J.G."/>
            <person name="Dear P.H."/>
            <person name="Noegel A.A."/>
            <person name="Barrell B.G."/>
            <person name="Kuspa A."/>
        </authorList>
    </citation>
    <scope>NUCLEOTIDE SEQUENCE [LARGE SCALE GENOMIC DNA]</scope>
    <source>
        <strain>AX4</strain>
    </source>
</reference>
<comment type="similarity">
    <text evidence="1">Belongs to the hssA/B family.</text>
</comment>
<proteinExistence type="inferred from homology"/>
<organism>
    <name type="scientific">Dictyostelium discoideum</name>
    <name type="common">Social amoeba</name>
    <dbReference type="NCBI Taxonomy" id="44689"/>
    <lineage>
        <taxon>Eukaryota</taxon>
        <taxon>Amoebozoa</taxon>
        <taxon>Evosea</taxon>
        <taxon>Eumycetozoa</taxon>
        <taxon>Dictyostelia</taxon>
        <taxon>Dictyosteliales</taxon>
        <taxon>Dictyosteliaceae</taxon>
        <taxon>Dictyostelium</taxon>
    </lineage>
</organism>
<dbReference type="EMBL" id="AAFI02000006">
    <property type="protein sequence ID" value="EAL71548.1"/>
    <property type="molecule type" value="Genomic_DNA"/>
</dbReference>
<dbReference type="RefSeq" id="XP_645506.1">
    <property type="nucleotide sequence ID" value="XM_640414.1"/>
</dbReference>
<dbReference type="FunCoup" id="Q75JC2">
    <property type="interactions" value="243"/>
</dbReference>
<dbReference type="PaxDb" id="44689-DDB0238813"/>
<dbReference type="EnsemblProtists" id="EAL71548">
    <property type="protein sequence ID" value="EAL71548"/>
    <property type="gene ID" value="DDB_G0271716"/>
</dbReference>
<dbReference type="GeneID" id="8618135"/>
<dbReference type="KEGG" id="ddi:DDB_G0271716"/>
<dbReference type="dictyBase" id="DDB_G0271716">
    <property type="gene designation" value="sigN14"/>
</dbReference>
<dbReference type="eggNOG" id="ENOG502RIQ1">
    <property type="taxonomic scope" value="Eukaryota"/>
</dbReference>
<dbReference type="HOGENOM" id="CLU_190274_0_0_1"/>
<dbReference type="InParanoid" id="Q75JC2"/>
<dbReference type="PRO" id="PR:Q75JC2"/>
<dbReference type="Proteomes" id="UP000002195">
    <property type="component" value="Chromosome 2"/>
</dbReference>
<dbReference type="GO" id="GO:0030587">
    <property type="term" value="P:sorocarp development"/>
    <property type="evidence" value="ECO:0000318"/>
    <property type="project" value="GO_Central"/>
</dbReference>
<dbReference type="InterPro" id="IPR008455">
    <property type="entry name" value="HssA/B-related"/>
</dbReference>
<dbReference type="PANTHER" id="PTHR31857">
    <property type="entry name" value="HSSA/B-LIKE PROTEIN 17-RELATED"/>
    <property type="match status" value="1"/>
</dbReference>
<dbReference type="PANTHER" id="PTHR31857:SF2">
    <property type="entry name" value="HSSA_B-LIKE PROTEIN 17-RELATED"/>
    <property type="match status" value="1"/>
</dbReference>
<dbReference type="Pfam" id="PF05710">
    <property type="entry name" value="Coiled"/>
    <property type="match status" value="1"/>
</dbReference>
<evidence type="ECO:0000305" key="1"/>
<name>HSL15_DICDI</name>
<accession>Q75JC2</accession>
<accession>Q55AL6</accession>
<gene>
    <name type="primary">hssl15</name>
    <name type="ORF">DDB_G0271716</name>
</gene>
<sequence length="89" mass="8421">MTILASISSIGNVKSISKSNNFSSLSNSSLQSSNSIQCGGCGGGSPLIGTVGNLVGGVLVGTGIIVGTVVGTVNGVVGGLLSGPNCGCH</sequence>